<organism>
    <name type="scientific">Mus musculus</name>
    <name type="common">Mouse</name>
    <dbReference type="NCBI Taxonomy" id="10090"/>
    <lineage>
        <taxon>Eukaryota</taxon>
        <taxon>Metazoa</taxon>
        <taxon>Chordata</taxon>
        <taxon>Craniata</taxon>
        <taxon>Vertebrata</taxon>
        <taxon>Euteleostomi</taxon>
        <taxon>Mammalia</taxon>
        <taxon>Eutheria</taxon>
        <taxon>Euarchontoglires</taxon>
        <taxon>Glires</taxon>
        <taxon>Rodentia</taxon>
        <taxon>Myomorpha</taxon>
        <taxon>Muroidea</taxon>
        <taxon>Muridae</taxon>
        <taxon>Murinae</taxon>
        <taxon>Mus</taxon>
        <taxon>Mus</taxon>
    </lineage>
</organism>
<comment type="function">
    <text evidence="1 5">Transposase-derived protein that may have nuclease activity (Potential). Does not have transposase activity (By similarity).</text>
</comment>
<comment type="cofactor">
    <cofactor evidence="5">
        <name>a divalent metal cation</name>
        <dbReference type="ChEBI" id="CHEBI:60240"/>
    </cofactor>
</comment>
<comment type="subunit">
    <text evidence="1">Interacts with NAIF1.</text>
</comment>
<comment type="subcellular location">
    <subcellularLocation>
        <location evidence="1">Nucleus</location>
    </subcellularLocation>
    <subcellularLocation>
        <location evidence="1">Cytoplasm</location>
    </subcellularLocation>
    <text evidence="1">Interaction with NAIF1 promotes translocation to the nucleus.</text>
</comment>
<comment type="alternative products">
    <event type="alternative splicing"/>
    <isoform>
        <id>Q8BR93-1</id>
        <name>1</name>
        <sequence type="displayed"/>
    </isoform>
    <isoform>
        <id>Q8BR93-2</id>
        <name>2</name>
        <sequence type="described" ref="VSP_021877 VSP_021878"/>
    </isoform>
    <isoform>
        <id>Q8BR93-3</id>
        <name>3</name>
        <sequence type="described" ref="VSP_021876 VSP_021879"/>
    </isoform>
</comment>
<comment type="tissue specificity">
    <text evidence="3">Detected in adult brain, eye, nerve tissue and lung. Detected in embryo.</text>
</comment>
<comment type="similarity">
    <text evidence="5">Belongs to the HARBI1 family.</text>
</comment>
<accession>Q8BR93</accession>
<accession>A2AH19</accession>
<accession>B7ZCF8</accession>
<accession>Q8BNA8</accession>
<accession>Q8BNT1</accession>
<accession>Q8C9N1</accession>
<name>HARB1_MOUSE</name>
<protein>
    <recommendedName>
        <fullName>Putative nuclease HARBI1</fullName>
        <ecNumber>3.1.-.-</ecNumber>
    </recommendedName>
    <alternativeName>
        <fullName>Harbinger transposase-derived nuclease</fullName>
    </alternativeName>
</protein>
<keyword id="KW-0025">Alternative splicing</keyword>
<keyword id="KW-0963">Cytoplasm</keyword>
<keyword id="KW-0378">Hydrolase</keyword>
<keyword id="KW-0479">Metal-binding</keyword>
<keyword id="KW-0540">Nuclease</keyword>
<keyword id="KW-0539">Nucleus</keyword>
<keyword id="KW-1185">Reference proteome</keyword>
<reference key="1">
    <citation type="journal article" date="2005" name="Science">
        <title>The transcriptional landscape of the mammalian genome.</title>
        <authorList>
            <person name="Carninci P."/>
            <person name="Kasukawa T."/>
            <person name="Katayama S."/>
            <person name="Gough J."/>
            <person name="Frith M.C."/>
            <person name="Maeda N."/>
            <person name="Oyama R."/>
            <person name="Ravasi T."/>
            <person name="Lenhard B."/>
            <person name="Wells C."/>
            <person name="Kodzius R."/>
            <person name="Shimokawa K."/>
            <person name="Bajic V.B."/>
            <person name="Brenner S.E."/>
            <person name="Batalov S."/>
            <person name="Forrest A.R."/>
            <person name="Zavolan M."/>
            <person name="Davis M.J."/>
            <person name="Wilming L.G."/>
            <person name="Aidinis V."/>
            <person name="Allen J.E."/>
            <person name="Ambesi-Impiombato A."/>
            <person name="Apweiler R."/>
            <person name="Aturaliya R.N."/>
            <person name="Bailey T.L."/>
            <person name="Bansal M."/>
            <person name="Baxter L."/>
            <person name="Beisel K.W."/>
            <person name="Bersano T."/>
            <person name="Bono H."/>
            <person name="Chalk A.M."/>
            <person name="Chiu K.P."/>
            <person name="Choudhary V."/>
            <person name="Christoffels A."/>
            <person name="Clutterbuck D.R."/>
            <person name="Crowe M.L."/>
            <person name="Dalla E."/>
            <person name="Dalrymple B.P."/>
            <person name="de Bono B."/>
            <person name="Della Gatta G."/>
            <person name="di Bernardo D."/>
            <person name="Down T."/>
            <person name="Engstrom P."/>
            <person name="Fagiolini M."/>
            <person name="Faulkner G."/>
            <person name="Fletcher C.F."/>
            <person name="Fukushima T."/>
            <person name="Furuno M."/>
            <person name="Futaki S."/>
            <person name="Gariboldi M."/>
            <person name="Georgii-Hemming P."/>
            <person name="Gingeras T.R."/>
            <person name="Gojobori T."/>
            <person name="Green R.E."/>
            <person name="Gustincich S."/>
            <person name="Harbers M."/>
            <person name="Hayashi Y."/>
            <person name="Hensch T.K."/>
            <person name="Hirokawa N."/>
            <person name="Hill D."/>
            <person name="Huminiecki L."/>
            <person name="Iacono M."/>
            <person name="Ikeo K."/>
            <person name="Iwama A."/>
            <person name="Ishikawa T."/>
            <person name="Jakt M."/>
            <person name="Kanapin A."/>
            <person name="Katoh M."/>
            <person name="Kawasawa Y."/>
            <person name="Kelso J."/>
            <person name="Kitamura H."/>
            <person name="Kitano H."/>
            <person name="Kollias G."/>
            <person name="Krishnan S.P."/>
            <person name="Kruger A."/>
            <person name="Kummerfeld S.K."/>
            <person name="Kurochkin I.V."/>
            <person name="Lareau L.F."/>
            <person name="Lazarevic D."/>
            <person name="Lipovich L."/>
            <person name="Liu J."/>
            <person name="Liuni S."/>
            <person name="McWilliam S."/>
            <person name="Madan Babu M."/>
            <person name="Madera M."/>
            <person name="Marchionni L."/>
            <person name="Matsuda H."/>
            <person name="Matsuzawa S."/>
            <person name="Miki H."/>
            <person name="Mignone F."/>
            <person name="Miyake S."/>
            <person name="Morris K."/>
            <person name="Mottagui-Tabar S."/>
            <person name="Mulder N."/>
            <person name="Nakano N."/>
            <person name="Nakauchi H."/>
            <person name="Ng P."/>
            <person name="Nilsson R."/>
            <person name="Nishiguchi S."/>
            <person name="Nishikawa S."/>
            <person name="Nori F."/>
            <person name="Ohara O."/>
            <person name="Okazaki Y."/>
            <person name="Orlando V."/>
            <person name="Pang K.C."/>
            <person name="Pavan W.J."/>
            <person name="Pavesi G."/>
            <person name="Pesole G."/>
            <person name="Petrovsky N."/>
            <person name="Piazza S."/>
            <person name="Reed J."/>
            <person name="Reid J.F."/>
            <person name="Ring B.Z."/>
            <person name="Ringwald M."/>
            <person name="Rost B."/>
            <person name="Ruan Y."/>
            <person name="Salzberg S.L."/>
            <person name="Sandelin A."/>
            <person name="Schneider C."/>
            <person name="Schoenbach C."/>
            <person name="Sekiguchi K."/>
            <person name="Semple C.A."/>
            <person name="Seno S."/>
            <person name="Sessa L."/>
            <person name="Sheng Y."/>
            <person name="Shibata Y."/>
            <person name="Shimada H."/>
            <person name="Shimada K."/>
            <person name="Silva D."/>
            <person name="Sinclair B."/>
            <person name="Sperling S."/>
            <person name="Stupka E."/>
            <person name="Sugiura K."/>
            <person name="Sultana R."/>
            <person name="Takenaka Y."/>
            <person name="Taki K."/>
            <person name="Tammoja K."/>
            <person name="Tan S.L."/>
            <person name="Tang S."/>
            <person name="Taylor M.S."/>
            <person name="Tegner J."/>
            <person name="Teichmann S.A."/>
            <person name="Ueda H.R."/>
            <person name="van Nimwegen E."/>
            <person name="Verardo R."/>
            <person name="Wei C.L."/>
            <person name="Yagi K."/>
            <person name="Yamanishi H."/>
            <person name="Zabarovsky E."/>
            <person name="Zhu S."/>
            <person name="Zimmer A."/>
            <person name="Hide W."/>
            <person name="Bult C."/>
            <person name="Grimmond S.M."/>
            <person name="Teasdale R.D."/>
            <person name="Liu E.T."/>
            <person name="Brusic V."/>
            <person name="Quackenbush J."/>
            <person name="Wahlestedt C."/>
            <person name="Mattick J.S."/>
            <person name="Hume D.A."/>
            <person name="Kai C."/>
            <person name="Sasaki D."/>
            <person name="Tomaru Y."/>
            <person name="Fukuda S."/>
            <person name="Kanamori-Katayama M."/>
            <person name="Suzuki M."/>
            <person name="Aoki J."/>
            <person name="Arakawa T."/>
            <person name="Iida J."/>
            <person name="Imamura K."/>
            <person name="Itoh M."/>
            <person name="Kato T."/>
            <person name="Kawaji H."/>
            <person name="Kawagashira N."/>
            <person name="Kawashima T."/>
            <person name="Kojima M."/>
            <person name="Kondo S."/>
            <person name="Konno H."/>
            <person name="Nakano K."/>
            <person name="Ninomiya N."/>
            <person name="Nishio T."/>
            <person name="Okada M."/>
            <person name="Plessy C."/>
            <person name="Shibata K."/>
            <person name="Shiraki T."/>
            <person name="Suzuki S."/>
            <person name="Tagami M."/>
            <person name="Waki K."/>
            <person name="Watahiki A."/>
            <person name="Okamura-Oho Y."/>
            <person name="Suzuki H."/>
            <person name="Kawai J."/>
            <person name="Hayashizaki Y."/>
        </authorList>
    </citation>
    <scope>NUCLEOTIDE SEQUENCE [LARGE SCALE MRNA] (ISOFORMS 1; 2 AND 3)</scope>
    <source>
        <strain>C57BL/6J</strain>
        <tissue>Amnion</tissue>
        <tissue>Brain cortex</tissue>
        <tissue>Eye</tissue>
        <tissue>Thymus</tissue>
    </source>
</reference>
<reference key="2">
    <citation type="journal article" date="2009" name="PLoS Biol.">
        <title>Lineage-specific biology revealed by a finished genome assembly of the mouse.</title>
        <authorList>
            <person name="Church D.M."/>
            <person name="Goodstadt L."/>
            <person name="Hillier L.W."/>
            <person name="Zody M.C."/>
            <person name="Goldstein S."/>
            <person name="She X."/>
            <person name="Bult C.J."/>
            <person name="Agarwala R."/>
            <person name="Cherry J.L."/>
            <person name="DiCuccio M."/>
            <person name="Hlavina W."/>
            <person name="Kapustin Y."/>
            <person name="Meric P."/>
            <person name="Maglott D."/>
            <person name="Birtle Z."/>
            <person name="Marques A.C."/>
            <person name="Graves T."/>
            <person name="Zhou S."/>
            <person name="Teague B."/>
            <person name="Potamousis K."/>
            <person name="Churas C."/>
            <person name="Place M."/>
            <person name="Herschleb J."/>
            <person name="Runnheim R."/>
            <person name="Forrest D."/>
            <person name="Amos-Landgraf J."/>
            <person name="Schwartz D.C."/>
            <person name="Cheng Z."/>
            <person name="Lindblad-Toh K."/>
            <person name="Eichler E.E."/>
            <person name="Ponting C.P."/>
        </authorList>
    </citation>
    <scope>NUCLEOTIDE SEQUENCE [LARGE SCALE GENOMIC DNA]</scope>
    <source>
        <strain>C57BL/6J</strain>
    </source>
</reference>
<reference key="3">
    <citation type="journal article" date="2004" name="Genome Res.">
        <title>The status, quality, and expansion of the NIH full-length cDNA project: the Mammalian Gene Collection (MGC).</title>
        <authorList>
            <consortium name="The MGC Project Team"/>
        </authorList>
    </citation>
    <scope>NUCLEOTIDE SEQUENCE [LARGE SCALE MRNA] (ISOFORM 1)</scope>
    <source>
        <strain>C57BL/6J</strain>
        <tissue>Brain</tissue>
    </source>
</reference>
<reference key="4">
    <citation type="journal article" date="2004" name="DNA Cell Biol.">
        <title>Harbinger transposons and an ancient HARBI1 gene derived from a transposase.</title>
        <authorList>
            <person name="Kapitonov V.V."/>
            <person name="Jurka J."/>
        </authorList>
    </citation>
    <scope>TISSUE SPECIFICITY</scope>
</reference>
<feature type="chain" id="PRO_0000263615" description="Putative nuclease HARBI1">
    <location>
        <begin position="1"/>
        <end position="349"/>
    </location>
</feature>
<feature type="domain" description="DDE Tnp4" evidence="2">
    <location>
        <begin position="149"/>
        <end position="300"/>
    </location>
</feature>
<feature type="binding site" evidence="2">
    <location>
        <position position="149"/>
    </location>
    <ligand>
        <name>a divalent metal cation</name>
        <dbReference type="ChEBI" id="CHEBI:60240"/>
    </ligand>
</feature>
<feature type="binding site" evidence="2">
    <location>
        <position position="199"/>
    </location>
    <ligand>
        <name>a divalent metal cation</name>
        <dbReference type="ChEBI" id="CHEBI:60240"/>
    </ligand>
</feature>
<feature type="binding site" evidence="2">
    <location>
        <position position="225"/>
    </location>
    <ligand>
        <name>a divalent metal cation</name>
        <dbReference type="ChEBI" id="CHEBI:60240"/>
    </ligand>
</feature>
<feature type="binding site" evidence="2">
    <location>
        <position position="261"/>
    </location>
    <ligand>
        <name>a divalent metal cation</name>
        <dbReference type="ChEBI" id="CHEBI:60240"/>
    </ligand>
</feature>
<feature type="splice variant" id="VSP_021876" description="In isoform 3." evidence="4">
    <original>DSSFFLRSWLLTPLPIPETAAE</original>
    <variation>KFASINFQFMSIEKLCRRVGEI</variation>
    <location>
        <begin position="225"/>
        <end position="246"/>
    </location>
</feature>
<feature type="splice variant" id="VSP_021877" description="In isoform 2." evidence="4">
    <original>DSSFFLRSWLLTPLPIPETAA</original>
    <variation>CATQALLYDCSVRESSAPES</variation>
    <location>
        <begin position="225"/>
        <end position="245"/>
    </location>
</feature>
<feature type="splice variant" id="VSP_021878" description="In isoform 2." evidence="4">
    <location>
        <begin position="246"/>
        <end position="349"/>
    </location>
</feature>
<feature type="splice variant" id="VSP_021879" description="In isoform 3." evidence="4">
    <location>
        <begin position="247"/>
        <end position="349"/>
    </location>
</feature>
<feature type="sequence conflict" description="In Ref. 1; BAC37974." evidence="5" ref="1">
    <original>R</original>
    <variation>Q</variation>
    <location>
        <position position="272"/>
    </location>
</feature>
<dbReference type="EC" id="3.1.-.-"/>
<dbReference type="EMBL" id="AK041747">
    <property type="protein sequence ID" value="BAC31051.1"/>
    <property type="molecule type" value="mRNA"/>
</dbReference>
<dbReference type="EMBL" id="AK045343">
    <property type="protein sequence ID" value="BAC32318.1"/>
    <property type="molecule type" value="mRNA"/>
</dbReference>
<dbReference type="EMBL" id="AK080671">
    <property type="protein sequence ID" value="BAC37974.1"/>
    <property type="molecule type" value="mRNA"/>
</dbReference>
<dbReference type="EMBL" id="AK084226">
    <property type="protein sequence ID" value="BAC39145.1"/>
    <property type="molecule type" value="mRNA"/>
</dbReference>
<dbReference type="EMBL" id="AK147045">
    <property type="protein sequence ID" value="BAE27631.1"/>
    <property type="molecule type" value="mRNA"/>
</dbReference>
<dbReference type="EMBL" id="AL714023">
    <property type="status" value="NOT_ANNOTATED_CDS"/>
    <property type="molecule type" value="Genomic_DNA"/>
</dbReference>
<dbReference type="EMBL" id="BC094315">
    <property type="protein sequence ID" value="AAH94315.1"/>
    <property type="molecule type" value="mRNA"/>
</dbReference>
<dbReference type="CCDS" id="CCDS50642.1">
    <molecule id="Q8BR93-1"/>
</dbReference>
<dbReference type="CCDS" id="CCDS89518.1">
    <molecule id="Q8BR93-2"/>
</dbReference>
<dbReference type="RefSeq" id="NP_001343447.1">
    <molecule id="Q8BR93-1"/>
    <property type="nucleotide sequence ID" value="NM_001356518.1"/>
</dbReference>
<dbReference type="RefSeq" id="NP_001343448.1">
    <molecule id="Q8BR93-2"/>
    <property type="nucleotide sequence ID" value="NM_001356519.1"/>
</dbReference>
<dbReference type="RefSeq" id="NP_848839.2">
    <molecule id="Q8BR93-1"/>
    <property type="nucleotide sequence ID" value="NM_178724.5"/>
</dbReference>
<dbReference type="RefSeq" id="XP_006499533.1">
    <property type="nucleotide sequence ID" value="XM_006499470.1"/>
</dbReference>
<dbReference type="RefSeq" id="XP_006499534.1">
    <molecule id="Q8BR93-1"/>
    <property type="nucleotide sequence ID" value="XM_006499471.4"/>
</dbReference>
<dbReference type="RefSeq" id="XP_017173596.1">
    <property type="nucleotide sequence ID" value="XM_017318107.1"/>
</dbReference>
<dbReference type="FunCoup" id="Q8BR93">
    <property type="interactions" value="153"/>
</dbReference>
<dbReference type="STRING" id="10090.ENSMUSP00000088098"/>
<dbReference type="PhosphoSitePlus" id="Q8BR93"/>
<dbReference type="PaxDb" id="10090-ENSMUSP00000088098"/>
<dbReference type="ProteomicsDB" id="270886">
    <molecule id="Q8BR93-1"/>
</dbReference>
<dbReference type="ProteomicsDB" id="270887">
    <molecule id="Q8BR93-2"/>
</dbReference>
<dbReference type="ProteomicsDB" id="270888">
    <molecule id="Q8BR93-3"/>
</dbReference>
<dbReference type="Antibodypedia" id="42871">
    <property type="antibodies" value="90 antibodies from 18 providers"/>
</dbReference>
<dbReference type="DNASU" id="241547"/>
<dbReference type="Ensembl" id="ENSMUST00000090608.6">
    <molecule id="Q8BR93-1"/>
    <property type="protein sequence ID" value="ENSMUSP00000088098.6"/>
    <property type="gene ID" value="ENSMUSG00000027243.9"/>
</dbReference>
<dbReference type="Ensembl" id="ENSMUST00000111322.2">
    <molecule id="Q8BR93-2"/>
    <property type="protein sequence ID" value="ENSMUSP00000106954.2"/>
    <property type="gene ID" value="ENSMUSG00000027243.9"/>
</dbReference>
<dbReference type="Ensembl" id="ENSMUST00000142692.2">
    <molecule id="Q8BR93-3"/>
    <property type="protein sequence ID" value="ENSMUSP00000121420.2"/>
    <property type="gene ID" value="ENSMUSG00000027243.9"/>
</dbReference>
<dbReference type="GeneID" id="241547"/>
<dbReference type="KEGG" id="mmu:241547"/>
<dbReference type="UCSC" id="uc008kwo.1">
    <molecule id="Q8BR93-3"/>
    <property type="organism name" value="mouse"/>
</dbReference>
<dbReference type="UCSC" id="uc008kwp.1">
    <molecule id="Q8BR93-1"/>
    <property type="organism name" value="mouse"/>
</dbReference>
<dbReference type="AGR" id="MGI:2443194"/>
<dbReference type="CTD" id="283254"/>
<dbReference type="MGI" id="MGI:2443194">
    <property type="gene designation" value="Harbi1"/>
</dbReference>
<dbReference type="VEuPathDB" id="HostDB:ENSMUSG00000027243"/>
<dbReference type="eggNOG" id="KOG4585">
    <property type="taxonomic scope" value="Eukaryota"/>
</dbReference>
<dbReference type="GeneTree" id="ENSGT00940000154348"/>
<dbReference type="HOGENOM" id="CLU_018552_13_0_1"/>
<dbReference type="InParanoid" id="Q8BR93"/>
<dbReference type="OMA" id="AEPNCKV"/>
<dbReference type="OrthoDB" id="10062286at2759"/>
<dbReference type="PhylomeDB" id="Q8BR93"/>
<dbReference type="TreeFam" id="TF327972"/>
<dbReference type="BioGRID-ORCS" id="241547">
    <property type="hits" value="2 hits in 76 CRISPR screens"/>
</dbReference>
<dbReference type="ChiTaRS" id="Harbi1">
    <property type="organism name" value="mouse"/>
</dbReference>
<dbReference type="PRO" id="PR:Q8BR93"/>
<dbReference type="Proteomes" id="UP000000589">
    <property type="component" value="Chromosome 2"/>
</dbReference>
<dbReference type="RNAct" id="Q8BR93">
    <property type="molecule type" value="protein"/>
</dbReference>
<dbReference type="Bgee" id="ENSMUSG00000027243">
    <property type="expression patterns" value="Expressed in dorsal pancreas and 220 other cell types or tissues"/>
</dbReference>
<dbReference type="ExpressionAtlas" id="Q8BR93">
    <property type="expression patterns" value="baseline and differential"/>
</dbReference>
<dbReference type="GO" id="GO:0034451">
    <property type="term" value="C:centriolar satellite"/>
    <property type="evidence" value="ECO:0007669"/>
    <property type="project" value="Ensembl"/>
</dbReference>
<dbReference type="GO" id="GO:0005829">
    <property type="term" value="C:cytosol"/>
    <property type="evidence" value="ECO:0007669"/>
    <property type="project" value="Ensembl"/>
</dbReference>
<dbReference type="GO" id="GO:0005634">
    <property type="term" value="C:nucleus"/>
    <property type="evidence" value="ECO:0007669"/>
    <property type="project" value="UniProtKB-SubCell"/>
</dbReference>
<dbReference type="GO" id="GO:0005886">
    <property type="term" value="C:plasma membrane"/>
    <property type="evidence" value="ECO:0007669"/>
    <property type="project" value="Ensembl"/>
</dbReference>
<dbReference type="GO" id="GO:0046872">
    <property type="term" value="F:metal ion binding"/>
    <property type="evidence" value="ECO:0007669"/>
    <property type="project" value="UniProtKB-KW"/>
</dbReference>
<dbReference type="GO" id="GO:0004518">
    <property type="term" value="F:nuclease activity"/>
    <property type="evidence" value="ECO:0007669"/>
    <property type="project" value="UniProtKB-KW"/>
</dbReference>
<dbReference type="InterPro" id="IPR045249">
    <property type="entry name" value="HARBI1-like"/>
</dbReference>
<dbReference type="InterPro" id="IPR026103">
    <property type="entry name" value="HARBI1_animal"/>
</dbReference>
<dbReference type="InterPro" id="IPR027806">
    <property type="entry name" value="HARBI1_dom"/>
</dbReference>
<dbReference type="PANTHER" id="PTHR22930">
    <property type="match status" value="1"/>
</dbReference>
<dbReference type="PANTHER" id="PTHR22930:SF253">
    <property type="entry name" value="NUCLEASE HARBI1-RELATED"/>
    <property type="match status" value="1"/>
</dbReference>
<dbReference type="Pfam" id="PF13359">
    <property type="entry name" value="DDE_Tnp_4"/>
    <property type="match status" value="1"/>
</dbReference>
<dbReference type="PRINTS" id="PR02086">
    <property type="entry name" value="PUTNUCHARBI1"/>
</dbReference>
<sequence>MAIPITVLDCDLLLYGRGHRTLDRFKLDDVTDEYLMSMYGFPRQFIYFLVELLGASLSRPTQRSRAISPETQILAALGFYTSGSFQTRMGDAIGISQASMSRCVANVTEALVERASQFIHFPVDEAAVQSLKDEFYGLAGMPGVIGVADCIHVAIKAPNAEDLSYVNRKGLHSLNCLVVCDIRGALMTVETSWPGSLQDCAVLQRSSLTSQFETGMPKDSWLLGDSSFFLRSWLLTPLPIPETAAEYRYNRAHSATHSVIERTLQTLCCRFRCLDGSKGALQYSPEKCSHIILACCVLHNISLDHGMDVWSSPVPGPIDQPPEGEDEHMESLDLEADRIRQELILTHFS</sequence>
<gene>
    <name type="primary">Harbi1</name>
</gene>
<proteinExistence type="evidence at transcript level"/>
<evidence type="ECO:0000250" key="1"/>
<evidence type="ECO:0000255" key="2"/>
<evidence type="ECO:0000269" key="3">
    <source>
    </source>
</evidence>
<evidence type="ECO:0000303" key="4">
    <source>
    </source>
</evidence>
<evidence type="ECO:0000305" key="5"/>